<accession>A7VN15</accession>
<name>MSMB3_PROFL</name>
<keyword id="KW-0903">Direct protein sequencing</keyword>
<keyword id="KW-1015">Disulfide bond</keyword>
<keyword id="KW-0964">Secreted</keyword>
<keyword id="KW-0732">Signal</keyword>
<evidence type="ECO:0000250" key="1"/>
<evidence type="ECO:0000269" key="2">
    <source>
    </source>
</evidence>
<evidence type="ECO:0000305" key="3"/>
<sequence>MKVFFILIIFSFTLATCQGECYGSVPLPIDGEDVPLRTCVDTHDGQKHLIVSTWKTANSFSCECTQIGLQCCQKYVAVA</sequence>
<proteinExistence type="evidence at protein level"/>
<organism>
    <name type="scientific">Protobothrops flavoviridis</name>
    <name type="common">Habu</name>
    <name type="synonym">Trimeresurus flavoviridis</name>
    <dbReference type="NCBI Taxonomy" id="88087"/>
    <lineage>
        <taxon>Eukaryota</taxon>
        <taxon>Metazoa</taxon>
        <taxon>Chordata</taxon>
        <taxon>Craniata</taxon>
        <taxon>Vertebrata</taxon>
        <taxon>Euteleostomi</taxon>
        <taxon>Lepidosauria</taxon>
        <taxon>Squamata</taxon>
        <taxon>Bifurcata</taxon>
        <taxon>Unidentata</taxon>
        <taxon>Episquamata</taxon>
        <taxon>Toxicofera</taxon>
        <taxon>Serpentes</taxon>
        <taxon>Colubroidea</taxon>
        <taxon>Viperidae</taxon>
        <taxon>Crotalinae</taxon>
        <taxon>Protobothrops</taxon>
    </lineage>
</organism>
<reference key="1">
    <citation type="journal article" date="2007" name="Biochem. Biophys. Res. Commun.">
        <title>Identification of novel serum proteins in a Japanese viper: homologs of mammalian PSP94.</title>
        <authorList>
            <person name="Aoki N."/>
            <person name="Sakiyama A."/>
            <person name="Deshimaru M."/>
            <person name="Terada S."/>
        </authorList>
    </citation>
    <scope>NUCLEOTIDE SEQUENCE [MRNA]</scope>
    <scope>PROTEIN SEQUENCE OF 20-64</scope>
    <scope>MASS SPECTROMETRY</scope>
    <source>
        <tissue>Liver</tissue>
        <tissue>Serum</tissue>
    </source>
</reference>
<dbReference type="EMBL" id="AB360908">
    <property type="protein sequence ID" value="BAF80053.1"/>
    <property type="molecule type" value="mRNA"/>
</dbReference>
<dbReference type="SMR" id="A7VN15"/>
<dbReference type="GO" id="GO:0005576">
    <property type="term" value="C:extracellular region"/>
    <property type="evidence" value="ECO:0007669"/>
    <property type="project" value="UniProtKB-SubCell"/>
</dbReference>
<dbReference type="Gene3D" id="2.10.70.10">
    <property type="entry name" value="Complement Module, domain 1"/>
    <property type="match status" value="1"/>
</dbReference>
<dbReference type="InterPro" id="IPR008735">
    <property type="entry name" value="PSP94"/>
</dbReference>
<dbReference type="Pfam" id="PF05825">
    <property type="entry name" value="PSP94"/>
    <property type="match status" value="1"/>
</dbReference>
<protein>
    <recommendedName>
        <fullName>Small serum protein 3</fullName>
        <shortName>SSP-3</shortName>
    </recommendedName>
</protein>
<feature type="signal peptide" evidence="2">
    <location>
        <begin position="1"/>
        <end position="19"/>
    </location>
</feature>
<feature type="chain" id="PRO_5000270322" description="Small serum protein 3">
    <location>
        <begin position="20"/>
        <end position="79"/>
    </location>
</feature>
<feature type="disulfide bond" evidence="1">
    <location>
        <begin position="21"/>
        <end position="72"/>
    </location>
</feature>
<feature type="disulfide bond" evidence="1">
    <location>
        <begin position="39"/>
        <end position="64"/>
    </location>
</feature>
<feature type="disulfide bond" evidence="1">
    <location>
        <begin position="62"/>
        <end position="71"/>
    </location>
</feature>
<comment type="function">
    <text>Shows an slight inhibitory effect toward the metalloproteinase brevilysin H6, but does not inhibit the metalloproteinases thermolysin, HR1A and HR1B.</text>
</comment>
<comment type="subcellular location">
    <subcellularLocation>
        <location>Secreted</location>
    </subcellularLocation>
</comment>
<comment type="mass spectrometry"/>
<comment type="similarity">
    <text evidence="3">Belongs to the beta-microseminoprotein family.</text>
</comment>